<feature type="chain" id="PRO_0000174678" description="Co-chaperonin GroES">
    <location>
        <begin position="1"/>
        <end position="96"/>
    </location>
</feature>
<comment type="function">
    <text evidence="1">Together with the chaperonin GroEL, plays an essential role in assisting protein folding. The GroEL-GroES system forms a nano-cage that allows encapsulation of the non-native substrate proteins and provides a physical environment optimized to promote and accelerate protein folding. GroES binds to the apical surface of the GroEL ring, thereby capping the opening of the GroEL channel.</text>
</comment>
<comment type="subunit">
    <text evidence="1">Heptamer of 7 subunits arranged in a ring. Interacts with the chaperonin GroEL.</text>
</comment>
<comment type="subcellular location">
    <subcellularLocation>
        <location evidence="1">Cytoplasm</location>
    </subcellularLocation>
</comment>
<comment type="similarity">
    <text evidence="1">Belongs to the GroES chaperonin family.</text>
</comment>
<name>CH10_ACIAD</name>
<organism>
    <name type="scientific">Acinetobacter baylyi (strain ATCC 33305 / BD413 / ADP1)</name>
    <dbReference type="NCBI Taxonomy" id="62977"/>
    <lineage>
        <taxon>Bacteria</taxon>
        <taxon>Pseudomonadati</taxon>
        <taxon>Pseudomonadota</taxon>
        <taxon>Gammaproteobacteria</taxon>
        <taxon>Moraxellales</taxon>
        <taxon>Moraxellaceae</taxon>
        <taxon>Acinetobacter</taxon>
    </lineage>
</organism>
<reference key="1">
    <citation type="journal article" date="2004" name="Nucleic Acids Res.">
        <title>Unique features revealed by the genome sequence of Acinetobacter sp. ADP1, a versatile and naturally transformation competent bacterium.</title>
        <authorList>
            <person name="Barbe V."/>
            <person name="Vallenet D."/>
            <person name="Fonknechten N."/>
            <person name="Kreimeyer A."/>
            <person name="Oztas S."/>
            <person name="Labarre L."/>
            <person name="Cruveiller S."/>
            <person name="Robert C."/>
            <person name="Duprat S."/>
            <person name="Wincker P."/>
            <person name="Ornston L.N."/>
            <person name="Weissenbach J."/>
            <person name="Marliere P."/>
            <person name="Cohen G.N."/>
            <person name="Medigue C."/>
        </authorList>
    </citation>
    <scope>NUCLEOTIDE SEQUENCE [LARGE SCALE GENOMIC DNA]</scope>
    <source>
        <strain>ATCC 33305 / BD413 / ADP1</strain>
    </source>
</reference>
<dbReference type="EMBL" id="CR543861">
    <property type="protein sequence ID" value="CAG69570.1"/>
    <property type="molecule type" value="Genomic_DNA"/>
</dbReference>
<dbReference type="RefSeq" id="WP_004929299.1">
    <property type="nucleotide sequence ID" value="NC_005966.1"/>
</dbReference>
<dbReference type="SMR" id="Q6F8P5"/>
<dbReference type="STRING" id="202950.GCA_001485005_03023"/>
<dbReference type="GeneID" id="45235075"/>
<dbReference type="KEGG" id="aci:ACIAD2839"/>
<dbReference type="eggNOG" id="COG0234">
    <property type="taxonomic scope" value="Bacteria"/>
</dbReference>
<dbReference type="HOGENOM" id="CLU_132825_2_0_6"/>
<dbReference type="OrthoDB" id="9806791at2"/>
<dbReference type="BioCyc" id="ASP62977:ACIAD_RS12800-MONOMER"/>
<dbReference type="Proteomes" id="UP000000430">
    <property type="component" value="Chromosome"/>
</dbReference>
<dbReference type="GO" id="GO:0005737">
    <property type="term" value="C:cytoplasm"/>
    <property type="evidence" value="ECO:0007669"/>
    <property type="project" value="UniProtKB-SubCell"/>
</dbReference>
<dbReference type="GO" id="GO:0005524">
    <property type="term" value="F:ATP binding"/>
    <property type="evidence" value="ECO:0007669"/>
    <property type="project" value="InterPro"/>
</dbReference>
<dbReference type="GO" id="GO:0046872">
    <property type="term" value="F:metal ion binding"/>
    <property type="evidence" value="ECO:0007669"/>
    <property type="project" value="TreeGrafter"/>
</dbReference>
<dbReference type="GO" id="GO:0044183">
    <property type="term" value="F:protein folding chaperone"/>
    <property type="evidence" value="ECO:0007669"/>
    <property type="project" value="InterPro"/>
</dbReference>
<dbReference type="GO" id="GO:0051087">
    <property type="term" value="F:protein-folding chaperone binding"/>
    <property type="evidence" value="ECO:0007669"/>
    <property type="project" value="TreeGrafter"/>
</dbReference>
<dbReference type="GO" id="GO:0051082">
    <property type="term" value="F:unfolded protein binding"/>
    <property type="evidence" value="ECO:0007669"/>
    <property type="project" value="TreeGrafter"/>
</dbReference>
<dbReference type="GO" id="GO:0051085">
    <property type="term" value="P:chaperone cofactor-dependent protein refolding"/>
    <property type="evidence" value="ECO:0007669"/>
    <property type="project" value="TreeGrafter"/>
</dbReference>
<dbReference type="CDD" id="cd00320">
    <property type="entry name" value="cpn10"/>
    <property type="match status" value="1"/>
</dbReference>
<dbReference type="FunFam" id="2.30.33.40:FF:000001">
    <property type="entry name" value="10 kDa chaperonin"/>
    <property type="match status" value="1"/>
</dbReference>
<dbReference type="Gene3D" id="2.30.33.40">
    <property type="entry name" value="GroES chaperonin"/>
    <property type="match status" value="1"/>
</dbReference>
<dbReference type="HAMAP" id="MF_00580">
    <property type="entry name" value="CH10"/>
    <property type="match status" value="1"/>
</dbReference>
<dbReference type="InterPro" id="IPR020818">
    <property type="entry name" value="Chaperonin_GroES"/>
</dbReference>
<dbReference type="InterPro" id="IPR037124">
    <property type="entry name" value="Chaperonin_GroES_sf"/>
</dbReference>
<dbReference type="InterPro" id="IPR018369">
    <property type="entry name" value="Chaprnonin_Cpn10_CS"/>
</dbReference>
<dbReference type="InterPro" id="IPR011032">
    <property type="entry name" value="GroES-like_sf"/>
</dbReference>
<dbReference type="NCBIfam" id="NF001527">
    <property type="entry name" value="PRK00364.1-2"/>
    <property type="match status" value="1"/>
</dbReference>
<dbReference type="NCBIfam" id="NF001531">
    <property type="entry name" value="PRK00364.2-2"/>
    <property type="match status" value="1"/>
</dbReference>
<dbReference type="NCBIfam" id="NF001533">
    <property type="entry name" value="PRK00364.2-4"/>
    <property type="match status" value="1"/>
</dbReference>
<dbReference type="NCBIfam" id="NF001534">
    <property type="entry name" value="PRK00364.2-5"/>
    <property type="match status" value="1"/>
</dbReference>
<dbReference type="PANTHER" id="PTHR10772">
    <property type="entry name" value="10 KDA HEAT SHOCK PROTEIN"/>
    <property type="match status" value="1"/>
</dbReference>
<dbReference type="PANTHER" id="PTHR10772:SF58">
    <property type="entry name" value="CO-CHAPERONIN GROES"/>
    <property type="match status" value="1"/>
</dbReference>
<dbReference type="Pfam" id="PF00166">
    <property type="entry name" value="Cpn10"/>
    <property type="match status" value="1"/>
</dbReference>
<dbReference type="PRINTS" id="PR00297">
    <property type="entry name" value="CHAPERONIN10"/>
</dbReference>
<dbReference type="SMART" id="SM00883">
    <property type="entry name" value="Cpn10"/>
    <property type="match status" value="1"/>
</dbReference>
<dbReference type="SUPFAM" id="SSF50129">
    <property type="entry name" value="GroES-like"/>
    <property type="match status" value="1"/>
</dbReference>
<dbReference type="PROSITE" id="PS00681">
    <property type="entry name" value="CHAPERONINS_CPN10"/>
    <property type="match status" value="1"/>
</dbReference>
<accession>Q6F8P5</accession>
<keyword id="KW-0143">Chaperone</keyword>
<keyword id="KW-0963">Cytoplasm</keyword>
<protein>
    <recommendedName>
        <fullName evidence="1">Co-chaperonin GroES</fullName>
    </recommendedName>
    <alternativeName>
        <fullName evidence="1">10 kDa chaperonin</fullName>
    </alternativeName>
    <alternativeName>
        <fullName evidence="1">Chaperonin-10</fullName>
        <shortName evidence="1">Cpn10</shortName>
    </alternativeName>
</protein>
<proteinExistence type="inferred from homology"/>
<gene>
    <name evidence="1" type="primary">groES</name>
    <name evidence="1" type="synonym">groS</name>
    <name type="ordered locus">ACIAD2839</name>
</gene>
<evidence type="ECO:0000255" key="1">
    <source>
        <dbReference type="HAMAP-Rule" id="MF_00580"/>
    </source>
</evidence>
<sequence>MSNIRPLHDRVVIRRVEEETKTAGGILLPGSAAEKPAQGEVIAVGNGQITENGVRALDVKAGDKVLFGTYAGTTVKVNGEEFLIMKESDILAVLEG</sequence>